<protein>
    <recommendedName>
        <fullName evidence="1">2-C-methyl-D-erythritol 2,4-cyclodiphosphate synthase</fullName>
        <shortName evidence="1">MECDP-synthase</shortName>
        <shortName evidence="1">MECPP-synthase</shortName>
        <shortName evidence="1">MECPS</shortName>
        <ecNumber evidence="1">4.6.1.12</ecNumber>
    </recommendedName>
</protein>
<proteinExistence type="inferred from homology"/>
<organism>
    <name type="scientific">Idiomarina loihiensis (strain ATCC BAA-735 / DSM 15497 / L2-TR)</name>
    <dbReference type="NCBI Taxonomy" id="283942"/>
    <lineage>
        <taxon>Bacteria</taxon>
        <taxon>Pseudomonadati</taxon>
        <taxon>Pseudomonadota</taxon>
        <taxon>Gammaproteobacteria</taxon>
        <taxon>Alteromonadales</taxon>
        <taxon>Idiomarinaceae</taxon>
        <taxon>Idiomarina</taxon>
    </lineage>
</organism>
<comment type="function">
    <text evidence="1">Involved in the biosynthesis of isopentenyl diphosphate (IPP) and dimethylallyl diphosphate (DMAPP), two major building blocks of isoprenoid compounds. Catalyzes the conversion of 4-diphosphocytidyl-2-C-methyl-D-erythritol 2-phosphate (CDP-ME2P) to 2-C-methyl-D-erythritol 2,4-cyclodiphosphate (ME-CPP) with a corresponding release of cytidine 5-monophosphate (CMP).</text>
</comment>
<comment type="catalytic activity">
    <reaction evidence="1">
        <text>4-CDP-2-C-methyl-D-erythritol 2-phosphate = 2-C-methyl-D-erythritol 2,4-cyclic diphosphate + CMP</text>
        <dbReference type="Rhea" id="RHEA:23864"/>
        <dbReference type="ChEBI" id="CHEBI:57919"/>
        <dbReference type="ChEBI" id="CHEBI:58483"/>
        <dbReference type="ChEBI" id="CHEBI:60377"/>
        <dbReference type="EC" id="4.6.1.12"/>
    </reaction>
</comment>
<comment type="cofactor">
    <cofactor evidence="1">
        <name>a divalent metal cation</name>
        <dbReference type="ChEBI" id="CHEBI:60240"/>
    </cofactor>
    <text evidence="1">Binds 1 divalent metal cation per subunit.</text>
</comment>
<comment type="pathway">
    <text evidence="1">Isoprenoid biosynthesis; isopentenyl diphosphate biosynthesis via DXP pathway; isopentenyl diphosphate from 1-deoxy-D-xylulose 5-phosphate: step 4/6.</text>
</comment>
<comment type="subunit">
    <text evidence="1">Homotrimer.</text>
</comment>
<comment type="similarity">
    <text evidence="1">Belongs to the IspF family.</text>
</comment>
<gene>
    <name evidence="1" type="primary">ispF</name>
    <name type="ordered locus">IL0751</name>
</gene>
<sequence length="159" mass="17080">MKIRVGHGYDVHRWGSDKPLILGGVEIEHHQGLVAHSDGDVVLHAVTDAVLGALALGDIGQHFPDTDERYAGADSAELLSHAVSLCQEKEFKTGNIDVTIVAQAPKMAPHIDDMRSSIAQCLKTCIDNVNVKATTTEKLGFVGREEGIACHAVVLMESF</sequence>
<accession>Q5QUC4</accession>
<dbReference type="EC" id="4.6.1.12" evidence="1"/>
<dbReference type="EMBL" id="AE017340">
    <property type="protein sequence ID" value="AAV81592.1"/>
    <property type="molecule type" value="Genomic_DNA"/>
</dbReference>
<dbReference type="RefSeq" id="WP_011234003.1">
    <property type="nucleotide sequence ID" value="NC_006512.1"/>
</dbReference>
<dbReference type="SMR" id="Q5QUC4"/>
<dbReference type="STRING" id="283942.IL0751"/>
<dbReference type="GeneID" id="41335905"/>
<dbReference type="KEGG" id="ilo:IL0751"/>
<dbReference type="eggNOG" id="COG0245">
    <property type="taxonomic scope" value="Bacteria"/>
</dbReference>
<dbReference type="HOGENOM" id="CLU_084630_2_0_6"/>
<dbReference type="OrthoDB" id="9804336at2"/>
<dbReference type="UniPathway" id="UPA00056">
    <property type="reaction ID" value="UER00095"/>
</dbReference>
<dbReference type="Proteomes" id="UP000001171">
    <property type="component" value="Chromosome"/>
</dbReference>
<dbReference type="GO" id="GO:0008685">
    <property type="term" value="F:2-C-methyl-D-erythritol 2,4-cyclodiphosphate synthase activity"/>
    <property type="evidence" value="ECO:0007669"/>
    <property type="project" value="UniProtKB-UniRule"/>
</dbReference>
<dbReference type="GO" id="GO:0046872">
    <property type="term" value="F:metal ion binding"/>
    <property type="evidence" value="ECO:0007669"/>
    <property type="project" value="UniProtKB-KW"/>
</dbReference>
<dbReference type="GO" id="GO:0019288">
    <property type="term" value="P:isopentenyl diphosphate biosynthetic process, methylerythritol 4-phosphate pathway"/>
    <property type="evidence" value="ECO:0007669"/>
    <property type="project" value="UniProtKB-UniRule"/>
</dbReference>
<dbReference type="GO" id="GO:0016114">
    <property type="term" value="P:terpenoid biosynthetic process"/>
    <property type="evidence" value="ECO:0007669"/>
    <property type="project" value="InterPro"/>
</dbReference>
<dbReference type="CDD" id="cd00554">
    <property type="entry name" value="MECDP_synthase"/>
    <property type="match status" value="1"/>
</dbReference>
<dbReference type="FunFam" id="3.30.1330.50:FF:000001">
    <property type="entry name" value="2-C-methyl-D-erythritol 2,4-cyclodiphosphate synthase"/>
    <property type="match status" value="1"/>
</dbReference>
<dbReference type="Gene3D" id="3.30.1330.50">
    <property type="entry name" value="2-C-methyl-D-erythritol 2,4-cyclodiphosphate synthase"/>
    <property type="match status" value="1"/>
</dbReference>
<dbReference type="HAMAP" id="MF_00107">
    <property type="entry name" value="IspF"/>
    <property type="match status" value="1"/>
</dbReference>
<dbReference type="InterPro" id="IPR003526">
    <property type="entry name" value="MECDP_synthase"/>
</dbReference>
<dbReference type="InterPro" id="IPR020555">
    <property type="entry name" value="MECDP_synthase_CS"/>
</dbReference>
<dbReference type="InterPro" id="IPR036571">
    <property type="entry name" value="MECDP_synthase_sf"/>
</dbReference>
<dbReference type="NCBIfam" id="TIGR00151">
    <property type="entry name" value="ispF"/>
    <property type="match status" value="1"/>
</dbReference>
<dbReference type="PANTHER" id="PTHR43181">
    <property type="entry name" value="2-C-METHYL-D-ERYTHRITOL 2,4-CYCLODIPHOSPHATE SYNTHASE, CHLOROPLASTIC"/>
    <property type="match status" value="1"/>
</dbReference>
<dbReference type="PANTHER" id="PTHR43181:SF1">
    <property type="entry name" value="2-C-METHYL-D-ERYTHRITOL 2,4-CYCLODIPHOSPHATE SYNTHASE, CHLOROPLASTIC"/>
    <property type="match status" value="1"/>
</dbReference>
<dbReference type="Pfam" id="PF02542">
    <property type="entry name" value="YgbB"/>
    <property type="match status" value="1"/>
</dbReference>
<dbReference type="SUPFAM" id="SSF69765">
    <property type="entry name" value="IpsF-like"/>
    <property type="match status" value="1"/>
</dbReference>
<dbReference type="PROSITE" id="PS01350">
    <property type="entry name" value="ISPF"/>
    <property type="match status" value="1"/>
</dbReference>
<feature type="chain" id="PRO_0000237732" description="2-C-methyl-D-erythritol 2,4-cyclodiphosphate synthase">
    <location>
        <begin position="1"/>
        <end position="159"/>
    </location>
</feature>
<feature type="binding site" evidence="1">
    <location>
        <begin position="10"/>
        <end position="12"/>
    </location>
    <ligand>
        <name>4-CDP-2-C-methyl-D-erythritol 2-phosphate</name>
        <dbReference type="ChEBI" id="CHEBI:57919"/>
    </ligand>
</feature>
<feature type="binding site" evidence="1">
    <location>
        <position position="10"/>
    </location>
    <ligand>
        <name>a divalent metal cation</name>
        <dbReference type="ChEBI" id="CHEBI:60240"/>
    </ligand>
</feature>
<feature type="binding site" evidence="1">
    <location>
        <position position="12"/>
    </location>
    <ligand>
        <name>a divalent metal cation</name>
        <dbReference type="ChEBI" id="CHEBI:60240"/>
    </ligand>
</feature>
<feature type="binding site" evidence="1">
    <location>
        <begin position="36"/>
        <end position="37"/>
    </location>
    <ligand>
        <name>4-CDP-2-C-methyl-D-erythritol 2-phosphate</name>
        <dbReference type="ChEBI" id="CHEBI:57919"/>
    </ligand>
</feature>
<feature type="binding site" evidence="1">
    <location>
        <position position="44"/>
    </location>
    <ligand>
        <name>a divalent metal cation</name>
        <dbReference type="ChEBI" id="CHEBI:60240"/>
    </ligand>
</feature>
<feature type="binding site" evidence="1">
    <location>
        <begin position="58"/>
        <end position="60"/>
    </location>
    <ligand>
        <name>4-CDP-2-C-methyl-D-erythritol 2-phosphate</name>
        <dbReference type="ChEBI" id="CHEBI:57919"/>
    </ligand>
</feature>
<feature type="binding site" evidence="1">
    <location>
        <begin position="63"/>
        <end position="67"/>
    </location>
    <ligand>
        <name>4-CDP-2-C-methyl-D-erythritol 2-phosphate</name>
        <dbReference type="ChEBI" id="CHEBI:57919"/>
    </ligand>
</feature>
<feature type="binding site" evidence="1">
    <location>
        <begin position="102"/>
        <end position="108"/>
    </location>
    <ligand>
        <name>4-CDP-2-C-methyl-D-erythritol 2-phosphate</name>
        <dbReference type="ChEBI" id="CHEBI:57919"/>
    </ligand>
</feature>
<feature type="binding site" evidence="1">
    <location>
        <begin position="134"/>
        <end position="137"/>
    </location>
    <ligand>
        <name>4-CDP-2-C-methyl-D-erythritol 2-phosphate</name>
        <dbReference type="ChEBI" id="CHEBI:57919"/>
    </ligand>
</feature>
<feature type="binding site" evidence="1">
    <location>
        <position position="141"/>
    </location>
    <ligand>
        <name>4-CDP-2-C-methyl-D-erythritol 2-phosphate</name>
        <dbReference type="ChEBI" id="CHEBI:57919"/>
    </ligand>
</feature>
<feature type="binding site" evidence="1">
    <location>
        <position position="144"/>
    </location>
    <ligand>
        <name>4-CDP-2-C-methyl-D-erythritol 2-phosphate</name>
        <dbReference type="ChEBI" id="CHEBI:57919"/>
    </ligand>
</feature>
<feature type="site" description="Transition state stabilizer" evidence="1">
    <location>
        <position position="36"/>
    </location>
</feature>
<feature type="site" description="Transition state stabilizer" evidence="1">
    <location>
        <position position="135"/>
    </location>
</feature>
<evidence type="ECO:0000255" key="1">
    <source>
        <dbReference type="HAMAP-Rule" id="MF_00107"/>
    </source>
</evidence>
<reference key="1">
    <citation type="journal article" date="2004" name="Proc. Natl. Acad. Sci. U.S.A.">
        <title>Genome sequence of the deep-sea gamma-proteobacterium Idiomarina loihiensis reveals amino acid fermentation as a source of carbon and energy.</title>
        <authorList>
            <person name="Hou S."/>
            <person name="Saw J.H."/>
            <person name="Lee K.S."/>
            <person name="Freitas T.A."/>
            <person name="Belisle C."/>
            <person name="Kawarabayasi Y."/>
            <person name="Donachie S.P."/>
            <person name="Pikina A."/>
            <person name="Galperin M.Y."/>
            <person name="Koonin E.V."/>
            <person name="Makarova K.S."/>
            <person name="Omelchenko M.V."/>
            <person name="Sorokin A."/>
            <person name="Wolf Y.I."/>
            <person name="Li Q.X."/>
            <person name="Keum Y.S."/>
            <person name="Campbell S."/>
            <person name="Denery J."/>
            <person name="Aizawa S."/>
            <person name="Shibata S."/>
            <person name="Malahoff A."/>
            <person name="Alam M."/>
        </authorList>
    </citation>
    <scope>NUCLEOTIDE SEQUENCE [LARGE SCALE GENOMIC DNA]</scope>
    <source>
        <strain>ATCC BAA-735 / DSM 15497 / L2-TR</strain>
    </source>
</reference>
<name>ISPF_IDILO</name>
<keyword id="KW-0414">Isoprene biosynthesis</keyword>
<keyword id="KW-0456">Lyase</keyword>
<keyword id="KW-0479">Metal-binding</keyword>
<keyword id="KW-1185">Reference proteome</keyword>